<dbReference type="EMBL" id="L06803">
    <property type="protein sequence ID" value="AAA29290.1"/>
    <property type="molecule type" value="mRNA"/>
</dbReference>
<dbReference type="PIR" id="A47174">
    <property type="entry name" value="A47174"/>
</dbReference>
<dbReference type="SMR" id="Q25414"/>
<dbReference type="GO" id="GO:0005886">
    <property type="term" value="C:plasma membrane"/>
    <property type="evidence" value="ECO:0007669"/>
    <property type="project" value="UniProtKB-SubCell"/>
</dbReference>
<dbReference type="GO" id="GO:0004930">
    <property type="term" value="F:G protein-coupled receptor activity"/>
    <property type="evidence" value="ECO:0007669"/>
    <property type="project" value="UniProtKB-KW"/>
</dbReference>
<dbReference type="GO" id="GO:0071880">
    <property type="term" value="P:adenylate cyclase-activating adrenergic receptor signaling pathway"/>
    <property type="evidence" value="ECO:0007669"/>
    <property type="project" value="TreeGrafter"/>
</dbReference>
<dbReference type="GO" id="GO:0043410">
    <property type="term" value="P:positive regulation of MAPK cascade"/>
    <property type="evidence" value="ECO:0007669"/>
    <property type="project" value="TreeGrafter"/>
</dbReference>
<dbReference type="CDD" id="cd15331">
    <property type="entry name" value="7tmA_5-HT1A_invertebrates"/>
    <property type="match status" value="1"/>
</dbReference>
<dbReference type="Gene3D" id="1.20.1070.10">
    <property type="entry name" value="Rhodopsin 7-helix transmembrane proteins"/>
    <property type="match status" value="1"/>
</dbReference>
<dbReference type="InterPro" id="IPR000276">
    <property type="entry name" value="GPCR_Rhodpsn"/>
</dbReference>
<dbReference type="InterPro" id="IPR017452">
    <property type="entry name" value="GPCR_Rhodpsn_7TM"/>
</dbReference>
<dbReference type="PANTHER" id="PTHR24248:SF200">
    <property type="entry name" value="5-HYDROXYTRYPTAMINE RECEPTOR 1B-LIKE ISOFORM X1"/>
    <property type="match status" value="1"/>
</dbReference>
<dbReference type="PANTHER" id="PTHR24248">
    <property type="entry name" value="ADRENERGIC RECEPTOR-RELATED G-PROTEIN COUPLED RECEPTOR"/>
    <property type="match status" value="1"/>
</dbReference>
<dbReference type="Pfam" id="PF00001">
    <property type="entry name" value="7tm_1"/>
    <property type="match status" value="1"/>
</dbReference>
<dbReference type="PRINTS" id="PR00237">
    <property type="entry name" value="GPCRRHODOPSN"/>
</dbReference>
<dbReference type="SMART" id="SM01381">
    <property type="entry name" value="7TM_GPCR_Srsx"/>
    <property type="match status" value="1"/>
</dbReference>
<dbReference type="SUPFAM" id="SSF81321">
    <property type="entry name" value="Family A G protein-coupled receptor-like"/>
    <property type="match status" value="1"/>
</dbReference>
<dbReference type="PROSITE" id="PS00237">
    <property type="entry name" value="G_PROTEIN_RECEP_F1_1"/>
    <property type="match status" value="1"/>
</dbReference>
<dbReference type="PROSITE" id="PS50262">
    <property type="entry name" value="G_PROTEIN_RECEP_F1_2"/>
    <property type="match status" value="1"/>
</dbReference>
<name>5HTR_LYMST</name>
<comment type="function">
    <text>This is a receptor for 5-hydroxytryptamine (serotonin), a biogenic hormone that function as a neurotransmitter, a hormone, and a mitogen.</text>
</comment>
<comment type="subcellular location">
    <subcellularLocation>
        <location>Cell membrane</location>
        <topology>Multi-pass membrane protein</topology>
    </subcellularLocation>
</comment>
<comment type="similarity">
    <text evidence="3">Belongs to the G-protein coupled receptor 1 family.</text>
</comment>
<reference key="1">
    <citation type="journal article" date="1993" name="Proc. Natl. Acad. Sci. U.S.A.">
        <title>Serotonin receptor cDNA cloned from Lymnaea stagnalis.</title>
        <authorList>
            <person name="Sugamori K.S."/>
            <person name="Sunahara R.K."/>
            <person name="Guan H.-C."/>
            <person name="Bulloch A.G."/>
            <person name="Tensen C.P."/>
            <person name="Seeman P."/>
            <person name="Niznik H.B."/>
            <person name="van Tol H.H."/>
        </authorList>
    </citation>
    <scope>NUCLEOTIDE SEQUENCE [MRNA]</scope>
</reference>
<feature type="chain" id="PRO_0000068987" description="5-hydroxytryptamine receptor">
    <location>
        <begin position="1"/>
        <end position="509"/>
    </location>
</feature>
<feature type="topological domain" description="Extracellular" evidence="1">
    <location>
        <begin position="1"/>
        <end position="99"/>
    </location>
</feature>
<feature type="transmembrane region" description="Helical; Name=1" evidence="1">
    <location>
        <begin position="100"/>
        <end position="122"/>
    </location>
</feature>
<feature type="topological domain" description="Cytoplasmic" evidence="1">
    <location>
        <begin position="123"/>
        <end position="132"/>
    </location>
</feature>
<feature type="transmembrane region" description="Helical; Name=2" evidence="1">
    <location>
        <begin position="133"/>
        <end position="154"/>
    </location>
</feature>
<feature type="topological domain" description="Extracellular" evidence="1">
    <location>
        <begin position="155"/>
        <end position="169"/>
    </location>
</feature>
<feature type="transmembrane region" description="Helical; Name=3" evidence="1">
    <location>
        <begin position="170"/>
        <end position="191"/>
    </location>
</feature>
<feature type="topological domain" description="Cytoplasmic" evidence="1">
    <location>
        <begin position="192"/>
        <end position="210"/>
    </location>
</feature>
<feature type="transmembrane region" description="Helical; Name=4" evidence="1">
    <location>
        <begin position="211"/>
        <end position="233"/>
    </location>
</feature>
<feature type="topological domain" description="Extracellular" evidence="1">
    <location>
        <begin position="234"/>
        <end position="259"/>
    </location>
</feature>
<feature type="transmembrane region" description="Helical; Name=5" evidence="1">
    <location>
        <begin position="260"/>
        <end position="281"/>
    </location>
</feature>
<feature type="topological domain" description="Cytoplasmic" evidence="1">
    <location>
        <begin position="282"/>
        <end position="432"/>
    </location>
</feature>
<feature type="transmembrane region" description="Helical; Name=6" evidence="1">
    <location>
        <begin position="433"/>
        <end position="456"/>
    </location>
</feature>
<feature type="topological domain" description="Extracellular" evidence="1">
    <location>
        <begin position="457"/>
        <end position="465"/>
    </location>
</feature>
<feature type="transmembrane region" description="Helical; Name=7" evidence="1">
    <location>
        <begin position="466"/>
        <end position="488"/>
    </location>
</feature>
<feature type="topological domain" description="Cytoplasmic" evidence="1">
    <location>
        <begin position="489"/>
        <end position="509"/>
    </location>
</feature>
<feature type="region of interest" description="Disordered" evidence="4">
    <location>
        <begin position="323"/>
        <end position="372"/>
    </location>
</feature>
<feature type="glycosylation site" description="N-linked (GlcNAc...) asparagine" evidence="2">
    <location>
        <position position="3"/>
    </location>
</feature>
<feature type="glycosylation site" description="N-linked (GlcNAc...) asparagine" evidence="2">
    <location>
        <position position="47"/>
    </location>
</feature>
<feature type="glycosylation site" description="N-linked (GlcNAc...) asparagine" evidence="2">
    <location>
        <position position="58"/>
    </location>
</feature>
<feature type="glycosylation site" description="N-linked (GlcNAc...) asparagine" evidence="2">
    <location>
        <position position="68"/>
    </location>
</feature>
<feature type="glycosylation site" description="N-linked (GlcNAc...) asparagine" evidence="2">
    <location>
        <position position="72"/>
    </location>
</feature>
<feature type="glycosylation site" description="N-linked (GlcNAc...) asparagine" evidence="2">
    <location>
        <position position="78"/>
    </location>
</feature>
<feature type="disulfide bond" evidence="3">
    <location>
        <begin position="168"/>
        <end position="246"/>
    </location>
</feature>
<sequence length="509" mass="56902">MANFTFGDLALDVARMGGLASTPSGLRSTGLTTPGLSPTGLVTSDFNDSYGLTGQFINGSHSSRSRDNASANDTSATNMTDDRYWSLTVYSHEHLVLTSVILGLFVLCCIIGNCFVIAAVMLERSLHNVANYLILSLAVADLMVAVLVMPLSVVSEISKVWFLHSEVCDMWISVDVLCCTASILHLVAIAMDRYWAVTSIDYIRRRSARRILLMIMVVWIVALFISIPPLFGWRDPNNDPDKTGTCIISQDKGYTIFSTVGAFYLPMLVMMIIYIRIWLVARSRIRKDKFQMTKARLKTEETTLVASPKTEYSVVSDCNGCNSPDSTTEKKKRRAPFKSYGCSPRPERKKNRAKKLPENANGVNSNSSSSERLKQIQIETAEAFANGCAEEASIAMLERQCNNGKKISSNDTPYSRTREKLELKRERKAARTLAIITGAFLICWLPFFIIALIGPFVDPEGIPPFARSFVLWLGYFNSLLNPIIYTIFSPEFRSAFQKILFGKYRRGHR</sequence>
<protein>
    <recommendedName>
        <fullName>5-hydroxytryptamine receptor</fullName>
        <shortName>5-HT receptor</shortName>
    </recommendedName>
    <alternativeName>
        <fullName>Serotonin receptor</fullName>
    </alternativeName>
</protein>
<accession>Q25414</accession>
<proteinExistence type="evidence at transcript level"/>
<evidence type="ECO:0000250" key="1"/>
<evidence type="ECO:0000255" key="2"/>
<evidence type="ECO:0000255" key="3">
    <source>
        <dbReference type="PROSITE-ProRule" id="PRU00521"/>
    </source>
</evidence>
<evidence type="ECO:0000256" key="4">
    <source>
        <dbReference type="SAM" id="MobiDB-lite"/>
    </source>
</evidence>
<keyword id="KW-1003">Cell membrane</keyword>
<keyword id="KW-1015">Disulfide bond</keyword>
<keyword id="KW-0297">G-protein coupled receptor</keyword>
<keyword id="KW-0325">Glycoprotein</keyword>
<keyword id="KW-0472">Membrane</keyword>
<keyword id="KW-0675">Receptor</keyword>
<keyword id="KW-0807">Transducer</keyword>
<keyword id="KW-0812">Transmembrane</keyword>
<keyword id="KW-1133">Transmembrane helix</keyword>
<organism>
    <name type="scientific">Lymnaea stagnalis</name>
    <name type="common">Great pond snail</name>
    <name type="synonym">Helix stagnalis</name>
    <dbReference type="NCBI Taxonomy" id="6523"/>
    <lineage>
        <taxon>Eukaryota</taxon>
        <taxon>Metazoa</taxon>
        <taxon>Spiralia</taxon>
        <taxon>Lophotrochozoa</taxon>
        <taxon>Mollusca</taxon>
        <taxon>Gastropoda</taxon>
        <taxon>Heterobranchia</taxon>
        <taxon>Euthyneura</taxon>
        <taxon>Panpulmonata</taxon>
        <taxon>Hygrophila</taxon>
        <taxon>Lymnaeoidea</taxon>
        <taxon>Lymnaeidae</taxon>
        <taxon>Lymnaea</taxon>
    </lineage>
</organism>